<gene>
    <name type="ordered locus">At1g11270</name>
    <name type="ORF">T28P6.23</name>
</gene>
<evidence type="ECO:0000255" key="1">
    <source>
        <dbReference type="PROSITE-ProRule" id="PRU00080"/>
    </source>
</evidence>
<keyword id="KW-0025">Alternative splicing</keyword>
<keyword id="KW-1185">Reference proteome</keyword>
<feature type="chain" id="PRO_0000283283" description="F-box protein At1g11270">
    <location>
        <begin position="1"/>
        <end position="312"/>
    </location>
</feature>
<feature type="domain" description="F-box" evidence="1">
    <location>
        <begin position="29"/>
        <end position="80"/>
    </location>
</feature>
<sequence length="312" mass="35682">MLKRDCSSVVGSERERDGSSLALKRHCSSVVKLLLPHDVVGLILERLPVESLLRFKCVSNQWKSTIESQCFQERQLIRRMESRGPDVLVVSFADDEDKYGRKAVFGSSIVSTFRFPTLHTLICYGSCEGLICIYCVYSPNIVVNPATKWHRSCPLSNLQQFLDDKFEKKEYDFPTPKLAFGKDKLNGTYKQVWLYNSSEFRLDDVTTCEVFDFSNNAWRYVHPASPYRINDYQDPVYSDGSVHWLTEGKESKILSFHLHTETFQVLCEAPFLRERDPVGDSMCILDNRLCVSEINGPAQLIWSLDSSGGNKC</sequence>
<reference key="1">
    <citation type="journal article" date="2000" name="Nature">
        <title>Sequence and analysis of chromosome 1 of the plant Arabidopsis thaliana.</title>
        <authorList>
            <person name="Theologis A."/>
            <person name="Ecker J.R."/>
            <person name="Palm C.J."/>
            <person name="Federspiel N.A."/>
            <person name="Kaul S."/>
            <person name="White O."/>
            <person name="Alonso J."/>
            <person name="Altafi H."/>
            <person name="Araujo R."/>
            <person name="Bowman C.L."/>
            <person name="Brooks S.Y."/>
            <person name="Buehler E."/>
            <person name="Chan A."/>
            <person name="Chao Q."/>
            <person name="Chen H."/>
            <person name="Cheuk R.F."/>
            <person name="Chin C.W."/>
            <person name="Chung M.K."/>
            <person name="Conn L."/>
            <person name="Conway A.B."/>
            <person name="Conway A.R."/>
            <person name="Creasy T.H."/>
            <person name="Dewar K."/>
            <person name="Dunn P."/>
            <person name="Etgu P."/>
            <person name="Feldblyum T.V."/>
            <person name="Feng J.-D."/>
            <person name="Fong B."/>
            <person name="Fujii C.Y."/>
            <person name="Gill J.E."/>
            <person name="Goldsmith A.D."/>
            <person name="Haas B."/>
            <person name="Hansen N.F."/>
            <person name="Hughes B."/>
            <person name="Huizar L."/>
            <person name="Hunter J.L."/>
            <person name="Jenkins J."/>
            <person name="Johnson-Hopson C."/>
            <person name="Khan S."/>
            <person name="Khaykin E."/>
            <person name="Kim C.J."/>
            <person name="Koo H.L."/>
            <person name="Kremenetskaia I."/>
            <person name="Kurtz D.B."/>
            <person name="Kwan A."/>
            <person name="Lam B."/>
            <person name="Langin-Hooper S."/>
            <person name="Lee A."/>
            <person name="Lee J.M."/>
            <person name="Lenz C.A."/>
            <person name="Li J.H."/>
            <person name="Li Y.-P."/>
            <person name="Lin X."/>
            <person name="Liu S.X."/>
            <person name="Liu Z.A."/>
            <person name="Luros J.S."/>
            <person name="Maiti R."/>
            <person name="Marziali A."/>
            <person name="Militscher J."/>
            <person name="Miranda M."/>
            <person name="Nguyen M."/>
            <person name="Nierman W.C."/>
            <person name="Osborne B.I."/>
            <person name="Pai G."/>
            <person name="Peterson J."/>
            <person name="Pham P.K."/>
            <person name="Rizzo M."/>
            <person name="Rooney T."/>
            <person name="Rowley D."/>
            <person name="Sakano H."/>
            <person name="Salzberg S.L."/>
            <person name="Schwartz J.R."/>
            <person name="Shinn P."/>
            <person name="Southwick A.M."/>
            <person name="Sun H."/>
            <person name="Tallon L.J."/>
            <person name="Tambunga G."/>
            <person name="Toriumi M.J."/>
            <person name="Town C.D."/>
            <person name="Utterback T."/>
            <person name="Van Aken S."/>
            <person name="Vaysberg M."/>
            <person name="Vysotskaia V.S."/>
            <person name="Walker M."/>
            <person name="Wu D."/>
            <person name="Yu G."/>
            <person name="Fraser C.M."/>
            <person name="Venter J.C."/>
            <person name="Davis R.W."/>
        </authorList>
    </citation>
    <scope>NUCLEOTIDE SEQUENCE [LARGE SCALE GENOMIC DNA]</scope>
    <source>
        <strain>cv. Columbia</strain>
    </source>
</reference>
<reference key="2">
    <citation type="journal article" date="2017" name="Plant J.">
        <title>Araport11: a complete reannotation of the Arabidopsis thaliana reference genome.</title>
        <authorList>
            <person name="Cheng C.Y."/>
            <person name="Krishnakumar V."/>
            <person name="Chan A.P."/>
            <person name="Thibaud-Nissen F."/>
            <person name="Schobel S."/>
            <person name="Town C.D."/>
        </authorList>
    </citation>
    <scope>GENOME REANNOTATION</scope>
    <source>
        <strain>cv. Columbia</strain>
    </source>
</reference>
<reference key="3">
    <citation type="journal article" date="2003" name="Science">
        <title>Empirical analysis of transcriptional activity in the Arabidopsis genome.</title>
        <authorList>
            <person name="Yamada K."/>
            <person name="Lim J."/>
            <person name="Dale J.M."/>
            <person name="Chen H."/>
            <person name="Shinn P."/>
            <person name="Palm C.J."/>
            <person name="Southwick A.M."/>
            <person name="Wu H.C."/>
            <person name="Kim C.J."/>
            <person name="Nguyen M."/>
            <person name="Pham P.K."/>
            <person name="Cheuk R.F."/>
            <person name="Karlin-Newmann G."/>
            <person name="Liu S.X."/>
            <person name="Lam B."/>
            <person name="Sakano H."/>
            <person name="Wu T."/>
            <person name="Yu G."/>
            <person name="Miranda M."/>
            <person name="Quach H.L."/>
            <person name="Tripp M."/>
            <person name="Chang C.H."/>
            <person name="Lee J.M."/>
            <person name="Toriumi M.J."/>
            <person name="Chan M.M."/>
            <person name="Tang C.C."/>
            <person name="Onodera C.S."/>
            <person name="Deng J.M."/>
            <person name="Akiyama K."/>
            <person name="Ansari Y."/>
            <person name="Arakawa T."/>
            <person name="Banh J."/>
            <person name="Banno F."/>
            <person name="Bowser L."/>
            <person name="Brooks S.Y."/>
            <person name="Carninci P."/>
            <person name="Chao Q."/>
            <person name="Choy N."/>
            <person name="Enju A."/>
            <person name="Goldsmith A.D."/>
            <person name="Gurjal M."/>
            <person name="Hansen N.F."/>
            <person name="Hayashizaki Y."/>
            <person name="Johnson-Hopson C."/>
            <person name="Hsuan V.W."/>
            <person name="Iida K."/>
            <person name="Karnes M."/>
            <person name="Khan S."/>
            <person name="Koesema E."/>
            <person name="Ishida J."/>
            <person name="Jiang P.X."/>
            <person name="Jones T."/>
            <person name="Kawai J."/>
            <person name="Kamiya A."/>
            <person name="Meyers C."/>
            <person name="Nakajima M."/>
            <person name="Narusaka M."/>
            <person name="Seki M."/>
            <person name="Sakurai T."/>
            <person name="Satou M."/>
            <person name="Tamse R."/>
            <person name="Vaysberg M."/>
            <person name="Wallender E.K."/>
            <person name="Wong C."/>
            <person name="Yamamura Y."/>
            <person name="Yuan S."/>
            <person name="Shinozaki K."/>
            <person name="Davis R.W."/>
            <person name="Theologis A."/>
            <person name="Ecker J.R."/>
        </authorList>
    </citation>
    <scope>NUCLEOTIDE SEQUENCE [LARGE SCALE MRNA]</scope>
    <source>
        <strain>cv. Columbia</strain>
    </source>
</reference>
<reference key="4">
    <citation type="submission" date="2006-07" db="EMBL/GenBank/DDBJ databases">
        <title>Large-scale analysis of RIKEN Arabidopsis full-length (RAFL) cDNAs.</title>
        <authorList>
            <person name="Totoki Y."/>
            <person name="Seki M."/>
            <person name="Ishida J."/>
            <person name="Nakajima M."/>
            <person name="Enju A."/>
            <person name="Kamiya A."/>
            <person name="Narusaka M."/>
            <person name="Shin-i T."/>
            <person name="Nakagawa M."/>
            <person name="Sakamoto N."/>
            <person name="Oishi K."/>
            <person name="Kohara Y."/>
            <person name="Kobayashi M."/>
            <person name="Toyoda A."/>
            <person name="Sakaki Y."/>
            <person name="Sakurai T."/>
            <person name="Iida K."/>
            <person name="Akiyama K."/>
            <person name="Satou M."/>
            <person name="Toyoda T."/>
            <person name="Konagaya A."/>
            <person name="Carninci P."/>
            <person name="Kawai J."/>
            <person name="Hayashizaki Y."/>
            <person name="Shinozaki K."/>
        </authorList>
    </citation>
    <scope>NUCLEOTIDE SEQUENCE [LARGE SCALE MRNA]</scope>
    <source>
        <strain>cv. Columbia</strain>
    </source>
</reference>
<name>FB4_ARATH</name>
<protein>
    <recommendedName>
        <fullName>F-box protein At1g11270</fullName>
    </recommendedName>
</protein>
<dbReference type="EMBL" id="AC007259">
    <property type="status" value="NOT_ANNOTATED_CDS"/>
    <property type="molecule type" value="Genomic_DNA"/>
</dbReference>
<dbReference type="EMBL" id="CP002684">
    <property type="protein sequence ID" value="AEE28706.1"/>
    <property type="molecule type" value="Genomic_DNA"/>
</dbReference>
<dbReference type="EMBL" id="CP002684">
    <property type="protein sequence ID" value="AEE28707.1"/>
    <property type="molecule type" value="Genomic_DNA"/>
</dbReference>
<dbReference type="EMBL" id="BT008547">
    <property type="protein sequence ID" value="AAP40374.1"/>
    <property type="molecule type" value="mRNA"/>
</dbReference>
<dbReference type="EMBL" id="BT008643">
    <property type="protein sequence ID" value="AAP40458.1"/>
    <property type="molecule type" value="mRNA"/>
</dbReference>
<dbReference type="EMBL" id="AK229702">
    <property type="protein sequence ID" value="BAF01541.1"/>
    <property type="molecule type" value="mRNA"/>
</dbReference>
<dbReference type="RefSeq" id="NP_172594.1">
    <molecule id="Q7X7A9-1"/>
    <property type="nucleotide sequence ID" value="NM_101000.5"/>
</dbReference>
<dbReference type="RefSeq" id="NP_973810.1">
    <molecule id="Q7X7A9-1"/>
    <property type="nucleotide sequence ID" value="NM_202081.2"/>
</dbReference>
<dbReference type="BioGRID" id="22909">
    <property type="interactions" value="2"/>
</dbReference>
<dbReference type="FunCoup" id="Q7X7A9">
    <property type="interactions" value="65"/>
</dbReference>
<dbReference type="IntAct" id="Q7X7A9">
    <property type="interactions" value="1"/>
</dbReference>
<dbReference type="STRING" id="3702.Q7X7A9"/>
<dbReference type="PaxDb" id="3702-AT1G11270.2"/>
<dbReference type="EnsemblPlants" id="AT1G11270.1">
    <molecule id="Q7X7A9-1"/>
    <property type="protein sequence ID" value="AT1G11270.1"/>
    <property type="gene ID" value="AT1G11270"/>
</dbReference>
<dbReference type="EnsemblPlants" id="AT1G11270.2">
    <molecule id="Q7X7A9-1"/>
    <property type="protein sequence ID" value="AT1G11270.2"/>
    <property type="gene ID" value="AT1G11270"/>
</dbReference>
<dbReference type="GeneID" id="837669"/>
<dbReference type="Gramene" id="AT1G11270.1">
    <molecule id="Q7X7A9-1"/>
    <property type="protein sequence ID" value="AT1G11270.1"/>
    <property type="gene ID" value="AT1G11270"/>
</dbReference>
<dbReference type="Gramene" id="AT1G11270.2">
    <molecule id="Q7X7A9-1"/>
    <property type="protein sequence ID" value="AT1G11270.2"/>
    <property type="gene ID" value="AT1G11270"/>
</dbReference>
<dbReference type="KEGG" id="ath:AT1G11270"/>
<dbReference type="Araport" id="AT1G11270"/>
<dbReference type="TAIR" id="AT1G11270"/>
<dbReference type="HOGENOM" id="CLU_027176_4_0_1"/>
<dbReference type="InParanoid" id="Q7X7A9"/>
<dbReference type="OMA" id="MCILDNC"/>
<dbReference type="PhylomeDB" id="Q7X7A9"/>
<dbReference type="PRO" id="PR:Q7X7A9"/>
<dbReference type="Proteomes" id="UP000006548">
    <property type="component" value="Chromosome 1"/>
</dbReference>
<dbReference type="ExpressionAtlas" id="Q7X7A9">
    <property type="expression patterns" value="baseline and differential"/>
</dbReference>
<dbReference type="GO" id="GO:0010286">
    <property type="term" value="P:heat acclimation"/>
    <property type="evidence" value="ECO:0000270"/>
    <property type="project" value="TAIR"/>
</dbReference>
<dbReference type="Gene3D" id="1.20.1280.50">
    <property type="match status" value="1"/>
</dbReference>
<dbReference type="InterPro" id="IPR006527">
    <property type="entry name" value="F-box-assoc_dom_typ1"/>
</dbReference>
<dbReference type="InterPro" id="IPR017451">
    <property type="entry name" value="F-box-assoc_interact_dom"/>
</dbReference>
<dbReference type="InterPro" id="IPR036047">
    <property type="entry name" value="F-box-like_dom_sf"/>
</dbReference>
<dbReference type="InterPro" id="IPR001810">
    <property type="entry name" value="F-box_dom"/>
</dbReference>
<dbReference type="InterPro" id="IPR050796">
    <property type="entry name" value="SCF_F-box_component"/>
</dbReference>
<dbReference type="NCBIfam" id="TIGR01640">
    <property type="entry name" value="F_box_assoc_1"/>
    <property type="match status" value="1"/>
</dbReference>
<dbReference type="PANTHER" id="PTHR31672">
    <property type="entry name" value="BNACNNG10540D PROTEIN"/>
    <property type="match status" value="1"/>
</dbReference>
<dbReference type="PANTHER" id="PTHR31672:SF13">
    <property type="entry name" value="F-BOX PROTEIN CPR30-LIKE"/>
    <property type="match status" value="1"/>
</dbReference>
<dbReference type="Pfam" id="PF00646">
    <property type="entry name" value="F-box"/>
    <property type="match status" value="1"/>
</dbReference>
<dbReference type="Pfam" id="PF07734">
    <property type="entry name" value="FBA_1"/>
    <property type="match status" value="1"/>
</dbReference>
<dbReference type="SMART" id="SM00256">
    <property type="entry name" value="FBOX"/>
    <property type="match status" value="1"/>
</dbReference>
<dbReference type="SUPFAM" id="SSF81383">
    <property type="entry name" value="F-box domain"/>
    <property type="match status" value="1"/>
</dbReference>
<dbReference type="PROSITE" id="PS50181">
    <property type="entry name" value="FBOX"/>
    <property type="match status" value="1"/>
</dbReference>
<accession>Q7X7A9</accession>
<accession>Q3E7H5</accession>
<proteinExistence type="evidence at transcript level"/>
<comment type="alternative products">
    <event type="alternative splicing"/>
    <isoform>
        <id>Q7X7A9-1</id>
        <name>1</name>
        <sequence type="displayed"/>
    </isoform>
    <text>A number of isoforms are produced. According to EST sequences.</text>
</comment>
<organism>
    <name type="scientific">Arabidopsis thaliana</name>
    <name type="common">Mouse-ear cress</name>
    <dbReference type="NCBI Taxonomy" id="3702"/>
    <lineage>
        <taxon>Eukaryota</taxon>
        <taxon>Viridiplantae</taxon>
        <taxon>Streptophyta</taxon>
        <taxon>Embryophyta</taxon>
        <taxon>Tracheophyta</taxon>
        <taxon>Spermatophyta</taxon>
        <taxon>Magnoliopsida</taxon>
        <taxon>eudicotyledons</taxon>
        <taxon>Gunneridae</taxon>
        <taxon>Pentapetalae</taxon>
        <taxon>rosids</taxon>
        <taxon>malvids</taxon>
        <taxon>Brassicales</taxon>
        <taxon>Brassicaceae</taxon>
        <taxon>Camelineae</taxon>
        <taxon>Arabidopsis</taxon>
    </lineage>
</organism>